<gene>
    <name evidence="1" type="primary">gpsA</name>
    <name type="ordered locus">Vapar_4099</name>
</gene>
<proteinExistence type="inferred from homology"/>
<evidence type="ECO:0000255" key="1">
    <source>
        <dbReference type="HAMAP-Rule" id="MF_00394"/>
    </source>
</evidence>
<name>GPDA_VARPS</name>
<keyword id="KW-0963">Cytoplasm</keyword>
<keyword id="KW-0444">Lipid biosynthesis</keyword>
<keyword id="KW-0443">Lipid metabolism</keyword>
<keyword id="KW-0520">NAD</keyword>
<keyword id="KW-0521">NADP</keyword>
<keyword id="KW-0547">Nucleotide-binding</keyword>
<keyword id="KW-0560">Oxidoreductase</keyword>
<keyword id="KW-0594">Phospholipid biosynthesis</keyword>
<keyword id="KW-1208">Phospholipid metabolism</keyword>
<feature type="chain" id="PRO_1000205871" description="Glycerol-3-phosphate dehydrogenase [NAD(P)+]">
    <location>
        <begin position="1"/>
        <end position="337"/>
    </location>
</feature>
<feature type="active site" description="Proton acceptor" evidence="1">
    <location>
        <position position="193"/>
    </location>
</feature>
<feature type="binding site" evidence="1">
    <location>
        <position position="11"/>
    </location>
    <ligand>
        <name>NADPH</name>
        <dbReference type="ChEBI" id="CHEBI:57783"/>
    </ligand>
</feature>
<feature type="binding site" evidence="1">
    <location>
        <position position="30"/>
    </location>
    <ligand>
        <name>NADPH</name>
        <dbReference type="ChEBI" id="CHEBI:57783"/>
    </ligand>
</feature>
<feature type="binding site" evidence="1">
    <location>
        <position position="102"/>
    </location>
    <ligand>
        <name>NADPH</name>
        <dbReference type="ChEBI" id="CHEBI:57783"/>
    </ligand>
</feature>
<feature type="binding site" evidence="1">
    <location>
        <position position="102"/>
    </location>
    <ligand>
        <name>sn-glycerol 3-phosphate</name>
        <dbReference type="ChEBI" id="CHEBI:57597"/>
    </ligand>
</feature>
<feature type="binding site" evidence="1">
    <location>
        <position position="138"/>
    </location>
    <ligand>
        <name>sn-glycerol 3-phosphate</name>
        <dbReference type="ChEBI" id="CHEBI:57597"/>
    </ligand>
</feature>
<feature type="binding site" evidence="1">
    <location>
        <position position="140"/>
    </location>
    <ligand>
        <name>sn-glycerol 3-phosphate</name>
        <dbReference type="ChEBI" id="CHEBI:57597"/>
    </ligand>
</feature>
<feature type="binding site" evidence="1">
    <location>
        <position position="142"/>
    </location>
    <ligand>
        <name>NADPH</name>
        <dbReference type="ChEBI" id="CHEBI:57783"/>
    </ligand>
</feature>
<feature type="binding site" evidence="1">
    <location>
        <position position="193"/>
    </location>
    <ligand>
        <name>sn-glycerol 3-phosphate</name>
        <dbReference type="ChEBI" id="CHEBI:57597"/>
    </ligand>
</feature>
<feature type="binding site" evidence="1">
    <location>
        <position position="246"/>
    </location>
    <ligand>
        <name>sn-glycerol 3-phosphate</name>
        <dbReference type="ChEBI" id="CHEBI:57597"/>
    </ligand>
</feature>
<feature type="binding site" evidence="1">
    <location>
        <position position="256"/>
    </location>
    <ligand>
        <name>sn-glycerol 3-phosphate</name>
        <dbReference type="ChEBI" id="CHEBI:57597"/>
    </ligand>
</feature>
<feature type="binding site" evidence="1">
    <location>
        <position position="257"/>
    </location>
    <ligand>
        <name>NADPH</name>
        <dbReference type="ChEBI" id="CHEBI:57783"/>
    </ligand>
</feature>
<feature type="binding site" evidence="1">
    <location>
        <position position="257"/>
    </location>
    <ligand>
        <name>sn-glycerol 3-phosphate</name>
        <dbReference type="ChEBI" id="CHEBI:57597"/>
    </ligand>
</feature>
<feature type="binding site" evidence="1">
    <location>
        <position position="258"/>
    </location>
    <ligand>
        <name>sn-glycerol 3-phosphate</name>
        <dbReference type="ChEBI" id="CHEBI:57597"/>
    </ligand>
</feature>
<feature type="binding site" evidence="1">
    <location>
        <position position="281"/>
    </location>
    <ligand>
        <name>NADPH</name>
        <dbReference type="ChEBI" id="CHEBI:57783"/>
    </ligand>
</feature>
<feature type="binding site" evidence="1">
    <location>
        <position position="283"/>
    </location>
    <ligand>
        <name>NADPH</name>
        <dbReference type="ChEBI" id="CHEBI:57783"/>
    </ligand>
</feature>
<sequence length="337" mass="34507">MKICVHGAGAWGTALAVNAAGRHEVTLWARDAAQAEAIAKARENVRYLPGLALPPALTVRAGDLHQARAGAELVVVATPMAALRQQLMALRGTTAPVAWLCKGVEPALDASSPASYGLLAHEIWGQVAPELMAGVLSGPSFAQEVAEGRPTALVAASPHAAVRDALVEAFHGPALRVYANDDIVGVEVGGAVKNVLAIATGLCDGLALGLNARAALITRGLAEMTRFGLALGARAETFMGLSGLGDLVLTATGDLSRNRKVGLLLAQGHTLAQAVASLGHVAEGVYCARTVVQRARGLGVEMPIAEGVVALLDGRLSPQEAVASLTGRDPVPESVRP</sequence>
<protein>
    <recommendedName>
        <fullName evidence="1">Glycerol-3-phosphate dehydrogenase [NAD(P)+]</fullName>
        <ecNumber evidence="1">1.1.1.94</ecNumber>
    </recommendedName>
    <alternativeName>
        <fullName evidence="1">NAD(P)(+)-dependent glycerol-3-phosphate dehydrogenase</fullName>
    </alternativeName>
    <alternativeName>
        <fullName evidence="1">NAD(P)H-dependent dihydroxyacetone-phosphate reductase</fullName>
    </alternativeName>
</protein>
<organism>
    <name type="scientific">Variovorax paradoxus (strain S110)</name>
    <dbReference type="NCBI Taxonomy" id="543728"/>
    <lineage>
        <taxon>Bacteria</taxon>
        <taxon>Pseudomonadati</taxon>
        <taxon>Pseudomonadota</taxon>
        <taxon>Betaproteobacteria</taxon>
        <taxon>Burkholderiales</taxon>
        <taxon>Comamonadaceae</taxon>
        <taxon>Variovorax</taxon>
    </lineage>
</organism>
<dbReference type="EC" id="1.1.1.94" evidence="1"/>
<dbReference type="EMBL" id="CP001635">
    <property type="protein sequence ID" value="ACS20712.1"/>
    <property type="molecule type" value="Genomic_DNA"/>
</dbReference>
<dbReference type="SMR" id="C5CWV5"/>
<dbReference type="STRING" id="543728.Vapar_4099"/>
<dbReference type="KEGG" id="vap:Vapar_4099"/>
<dbReference type="eggNOG" id="COG0240">
    <property type="taxonomic scope" value="Bacteria"/>
</dbReference>
<dbReference type="HOGENOM" id="CLU_033449_0_2_4"/>
<dbReference type="OrthoDB" id="9812273at2"/>
<dbReference type="UniPathway" id="UPA00940"/>
<dbReference type="GO" id="GO:0005829">
    <property type="term" value="C:cytosol"/>
    <property type="evidence" value="ECO:0007669"/>
    <property type="project" value="TreeGrafter"/>
</dbReference>
<dbReference type="GO" id="GO:0047952">
    <property type="term" value="F:glycerol-3-phosphate dehydrogenase [NAD(P)+] activity"/>
    <property type="evidence" value="ECO:0007669"/>
    <property type="project" value="UniProtKB-UniRule"/>
</dbReference>
<dbReference type="GO" id="GO:0051287">
    <property type="term" value="F:NAD binding"/>
    <property type="evidence" value="ECO:0007669"/>
    <property type="project" value="InterPro"/>
</dbReference>
<dbReference type="GO" id="GO:0005975">
    <property type="term" value="P:carbohydrate metabolic process"/>
    <property type="evidence" value="ECO:0007669"/>
    <property type="project" value="InterPro"/>
</dbReference>
<dbReference type="GO" id="GO:0046167">
    <property type="term" value="P:glycerol-3-phosphate biosynthetic process"/>
    <property type="evidence" value="ECO:0007669"/>
    <property type="project" value="UniProtKB-UniRule"/>
</dbReference>
<dbReference type="GO" id="GO:0046168">
    <property type="term" value="P:glycerol-3-phosphate catabolic process"/>
    <property type="evidence" value="ECO:0007669"/>
    <property type="project" value="InterPro"/>
</dbReference>
<dbReference type="GO" id="GO:0006650">
    <property type="term" value="P:glycerophospholipid metabolic process"/>
    <property type="evidence" value="ECO:0007669"/>
    <property type="project" value="UniProtKB-UniRule"/>
</dbReference>
<dbReference type="GO" id="GO:0008654">
    <property type="term" value="P:phospholipid biosynthetic process"/>
    <property type="evidence" value="ECO:0007669"/>
    <property type="project" value="UniProtKB-KW"/>
</dbReference>
<dbReference type="FunFam" id="1.10.1040.10:FF:000001">
    <property type="entry name" value="Glycerol-3-phosphate dehydrogenase [NAD(P)+]"/>
    <property type="match status" value="1"/>
</dbReference>
<dbReference type="Gene3D" id="1.10.1040.10">
    <property type="entry name" value="N-(1-d-carboxylethyl)-l-norvaline Dehydrogenase, domain 2"/>
    <property type="match status" value="1"/>
</dbReference>
<dbReference type="Gene3D" id="3.40.50.720">
    <property type="entry name" value="NAD(P)-binding Rossmann-like Domain"/>
    <property type="match status" value="1"/>
</dbReference>
<dbReference type="HAMAP" id="MF_00394">
    <property type="entry name" value="NAD_Glyc3P_dehydrog"/>
    <property type="match status" value="1"/>
</dbReference>
<dbReference type="InterPro" id="IPR008927">
    <property type="entry name" value="6-PGluconate_DH-like_C_sf"/>
</dbReference>
<dbReference type="InterPro" id="IPR013328">
    <property type="entry name" value="6PGD_dom2"/>
</dbReference>
<dbReference type="InterPro" id="IPR006168">
    <property type="entry name" value="G3P_DH_NAD-dep"/>
</dbReference>
<dbReference type="InterPro" id="IPR006109">
    <property type="entry name" value="G3P_DH_NAD-dep_C"/>
</dbReference>
<dbReference type="InterPro" id="IPR011128">
    <property type="entry name" value="G3P_DH_NAD-dep_N"/>
</dbReference>
<dbReference type="InterPro" id="IPR036291">
    <property type="entry name" value="NAD(P)-bd_dom_sf"/>
</dbReference>
<dbReference type="NCBIfam" id="NF000940">
    <property type="entry name" value="PRK00094.1-2"/>
    <property type="match status" value="1"/>
</dbReference>
<dbReference type="NCBIfam" id="NF000942">
    <property type="entry name" value="PRK00094.1-4"/>
    <property type="match status" value="1"/>
</dbReference>
<dbReference type="PANTHER" id="PTHR11728">
    <property type="entry name" value="GLYCEROL-3-PHOSPHATE DEHYDROGENASE"/>
    <property type="match status" value="1"/>
</dbReference>
<dbReference type="PANTHER" id="PTHR11728:SF1">
    <property type="entry name" value="GLYCEROL-3-PHOSPHATE DEHYDROGENASE [NAD(+)] 2, CHLOROPLASTIC"/>
    <property type="match status" value="1"/>
</dbReference>
<dbReference type="Pfam" id="PF07479">
    <property type="entry name" value="NAD_Gly3P_dh_C"/>
    <property type="match status" value="1"/>
</dbReference>
<dbReference type="Pfam" id="PF01210">
    <property type="entry name" value="NAD_Gly3P_dh_N"/>
    <property type="match status" value="1"/>
</dbReference>
<dbReference type="PIRSF" id="PIRSF000114">
    <property type="entry name" value="Glycerol-3-P_dh"/>
    <property type="match status" value="1"/>
</dbReference>
<dbReference type="PRINTS" id="PR00077">
    <property type="entry name" value="GPDHDRGNASE"/>
</dbReference>
<dbReference type="SUPFAM" id="SSF48179">
    <property type="entry name" value="6-phosphogluconate dehydrogenase C-terminal domain-like"/>
    <property type="match status" value="1"/>
</dbReference>
<dbReference type="SUPFAM" id="SSF51735">
    <property type="entry name" value="NAD(P)-binding Rossmann-fold domains"/>
    <property type="match status" value="1"/>
</dbReference>
<dbReference type="PROSITE" id="PS00957">
    <property type="entry name" value="NAD_G3PDH"/>
    <property type="match status" value="1"/>
</dbReference>
<accession>C5CWV5</accession>
<reference key="1">
    <citation type="journal article" date="2011" name="J. Bacteriol.">
        <title>Complete genome sequence of the metabolically versatile plant growth-promoting endophyte, Variovorax paradoxus S110.</title>
        <authorList>
            <person name="Han J.I."/>
            <person name="Choi H.K."/>
            <person name="Lee S.W."/>
            <person name="Orwin P.M."/>
            <person name="Kim J."/>
            <person name="Laroe S.L."/>
            <person name="Kim T.G."/>
            <person name="O'Neil J."/>
            <person name="Leadbetter J.R."/>
            <person name="Lee S.Y."/>
            <person name="Hur C.G."/>
            <person name="Spain J.C."/>
            <person name="Ovchinnikova G."/>
            <person name="Goodwin L."/>
            <person name="Han C."/>
        </authorList>
    </citation>
    <scope>NUCLEOTIDE SEQUENCE [LARGE SCALE GENOMIC DNA]</scope>
    <source>
        <strain>S110</strain>
    </source>
</reference>
<comment type="function">
    <text evidence="1">Catalyzes the reduction of the glycolytic intermediate dihydroxyacetone phosphate (DHAP) to sn-glycerol 3-phosphate (G3P), the key precursor for phospholipid synthesis.</text>
</comment>
<comment type="catalytic activity">
    <reaction evidence="1">
        <text>sn-glycerol 3-phosphate + NAD(+) = dihydroxyacetone phosphate + NADH + H(+)</text>
        <dbReference type="Rhea" id="RHEA:11092"/>
        <dbReference type="ChEBI" id="CHEBI:15378"/>
        <dbReference type="ChEBI" id="CHEBI:57540"/>
        <dbReference type="ChEBI" id="CHEBI:57597"/>
        <dbReference type="ChEBI" id="CHEBI:57642"/>
        <dbReference type="ChEBI" id="CHEBI:57945"/>
        <dbReference type="EC" id="1.1.1.94"/>
    </reaction>
    <physiologicalReaction direction="right-to-left" evidence="1">
        <dbReference type="Rhea" id="RHEA:11094"/>
    </physiologicalReaction>
</comment>
<comment type="catalytic activity">
    <reaction evidence="1">
        <text>sn-glycerol 3-phosphate + NADP(+) = dihydroxyacetone phosphate + NADPH + H(+)</text>
        <dbReference type="Rhea" id="RHEA:11096"/>
        <dbReference type="ChEBI" id="CHEBI:15378"/>
        <dbReference type="ChEBI" id="CHEBI:57597"/>
        <dbReference type="ChEBI" id="CHEBI:57642"/>
        <dbReference type="ChEBI" id="CHEBI:57783"/>
        <dbReference type="ChEBI" id="CHEBI:58349"/>
        <dbReference type="EC" id="1.1.1.94"/>
    </reaction>
    <physiologicalReaction direction="right-to-left" evidence="1">
        <dbReference type="Rhea" id="RHEA:11098"/>
    </physiologicalReaction>
</comment>
<comment type="pathway">
    <text evidence="1">Membrane lipid metabolism; glycerophospholipid metabolism.</text>
</comment>
<comment type="subcellular location">
    <subcellularLocation>
        <location evidence="1">Cytoplasm</location>
    </subcellularLocation>
</comment>
<comment type="similarity">
    <text evidence="1">Belongs to the NAD-dependent glycerol-3-phosphate dehydrogenase family.</text>
</comment>